<protein>
    <recommendedName>
        <fullName evidence="1 5">Ketol-acid reductoisomerase (NADP(+))</fullName>
        <shortName evidence="1 5">KARI</shortName>
        <ecNumber evidence="1 4">1.1.1.86</ecNumber>
    </recommendedName>
    <alternativeName>
        <fullName evidence="1">Acetohydroxy-acid isomeroreductase</fullName>
        <shortName evidence="1">AHIR</shortName>
    </alternativeName>
    <alternativeName>
        <fullName evidence="1">Alpha-keto-beta-hydroxylacyl reductoisomerase</fullName>
    </alternativeName>
    <alternativeName>
        <fullName evidence="1 5">Ketol-acid reductoisomerase type 1</fullName>
    </alternativeName>
    <alternativeName>
        <fullName evidence="1 5">Ketol-acid reductoisomerase type I</fullName>
    </alternativeName>
</protein>
<accession>Q02138</accession>
<accession>Q9CG82</accession>
<evidence type="ECO:0000255" key="1">
    <source>
        <dbReference type="HAMAP-Rule" id="MF_00435"/>
    </source>
</evidence>
<evidence type="ECO:0000255" key="2">
    <source>
        <dbReference type="PROSITE-ProRule" id="PRU01197"/>
    </source>
</evidence>
<evidence type="ECO:0000255" key="3">
    <source>
        <dbReference type="PROSITE-ProRule" id="PRU01198"/>
    </source>
</evidence>
<evidence type="ECO:0000269" key="4">
    <source>
    </source>
</evidence>
<evidence type="ECO:0000303" key="5">
    <source>
    </source>
</evidence>
<evidence type="ECO:0000305" key="6"/>
<evidence type="ECO:0000305" key="7">
    <source>
    </source>
</evidence>
<comment type="function">
    <text evidence="1 4">Involved in the biosynthesis of branched-chain amino acids (BCAA). Catalyzes an alkyl-migration followed by a ketol-acid reduction of (S)-2-acetolactate (S2AL) to yield (R)-2,3-dihydroxy-isovalerate. In the isomerase reaction, S2AL is rearranged via a Mg-dependent methyl migration to produce 3-hydroxy-3-methyl-2-ketobutyrate (HMKB). In the reductase reaction, this 2-ketoacid undergoes a metal-dependent reduction by NADPH to yield (R)-2,3-dihydroxy-isovalerate.</text>
</comment>
<comment type="catalytic activity">
    <reaction evidence="1 4">
        <text>(2R)-2,3-dihydroxy-3-methylbutanoate + NADP(+) = (2S)-2-acetolactate + NADPH + H(+)</text>
        <dbReference type="Rhea" id="RHEA:22068"/>
        <dbReference type="ChEBI" id="CHEBI:15378"/>
        <dbReference type="ChEBI" id="CHEBI:49072"/>
        <dbReference type="ChEBI" id="CHEBI:57783"/>
        <dbReference type="ChEBI" id="CHEBI:58349"/>
        <dbReference type="ChEBI" id="CHEBI:58476"/>
        <dbReference type="EC" id="1.1.1.86"/>
    </reaction>
</comment>
<comment type="catalytic activity">
    <reaction evidence="1">
        <text>(2R,3R)-2,3-dihydroxy-3-methylpentanoate + NADP(+) = (S)-2-ethyl-2-hydroxy-3-oxobutanoate + NADPH + H(+)</text>
        <dbReference type="Rhea" id="RHEA:13493"/>
        <dbReference type="ChEBI" id="CHEBI:15378"/>
        <dbReference type="ChEBI" id="CHEBI:49256"/>
        <dbReference type="ChEBI" id="CHEBI:49258"/>
        <dbReference type="ChEBI" id="CHEBI:57783"/>
        <dbReference type="ChEBI" id="CHEBI:58349"/>
        <dbReference type="EC" id="1.1.1.86"/>
    </reaction>
</comment>
<comment type="cofactor">
    <cofactor evidence="1">
        <name>Mg(2+)</name>
        <dbReference type="ChEBI" id="CHEBI:18420"/>
    </cofactor>
    <text evidence="1">Binds 2 magnesium ions per subunit.</text>
</comment>
<comment type="biophysicochemical properties">
    <kinetics>
        <KM evidence="4">13 uM for NADPH (at pH 7)</KM>
        <KM evidence="4">285 uM for NADH (at pH 7)</KM>
        <text evidence="4">kcat is 0.8 sec(-1) for reductoisomerase activity with NADPH as substrate (at pH 7). kcat is 0.1 sec(-1) for reductoisomerase activity with NADH as substrate (at pH 7).</text>
    </kinetics>
</comment>
<comment type="pathway">
    <text evidence="1 7">Amino-acid biosynthesis; L-isoleucine biosynthesis; L-isoleucine from 2-oxobutanoate: step 2/4.</text>
</comment>
<comment type="pathway">
    <text evidence="1 7">Amino-acid biosynthesis; L-valine biosynthesis; L-valine from pyruvate: step 2/4.</text>
</comment>
<comment type="similarity">
    <text evidence="1">Belongs to the ketol-acid reductoisomerase family.</text>
</comment>
<dbReference type="EC" id="1.1.1.86" evidence="1 4"/>
<dbReference type="EMBL" id="U92974">
    <property type="protein sequence ID" value="AAB81921.1"/>
    <property type="molecule type" value="Genomic_DNA"/>
</dbReference>
<dbReference type="EMBL" id="AE005176">
    <property type="protein sequence ID" value="AAK05324.1"/>
    <property type="molecule type" value="Genomic_DNA"/>
</dbReference>
<dbReference type="PIR" id="B86778">
    <property type="entry name" value="B86778"/>
</dbReference>
<dbReference type="PIR" id="S35140">
    <property type="entry name" value="S35140"/>
</dbReference>
<dbReference type="RefSeq" id="NP_267382.1">
    <property type="nucleotide sequence ID" value="NC_002662.1"/>
</dbReference>
<dbReference type="RefSeq" id="WP_003131136.1">
    <property type="nucleotide sequence ID" value="NC_002662.1"/>
</dbReference>
<dbReference type="SMR" id="Q02138"/>
<dbReference type="PaxDb" id="272623-L0080"/>
<dbReference type="EnsemblBacteria" id="AAK05324">
    <property type="protein sequence ID" value="AAK05324"/>
    <property type="gene ID" value="L0080"/>
</dbReference>
<dbReference type="KEGG" id="lla:L0080"/>
<dbReference type="PATRIC" id="fig|272623.7.peg.1325"/>
<dbReference type="eggNOG" id="COG0059">
    <property type="taxonomic scope" value="Bacteria"/>
</dbReference>
<dbReference type="HOGENOM" id="CLU_033821_0_1_9"/>
<dbReference type="OrthoDB" id="9804088at2"/>
<dbReference type="BRENDA" id="1.1.1.383">
    <property type="organism ID" value="2864"/>
</dbReference>
<dbReference type="UniPathway" id="UPA00047">
    <property type="reaction ID" value="UER00056"/>
</dbReference>
<dbReference type="UniPathway" id="UPA00049">
    <property type="reaction ID" value="UER00060"/>
</dbReference>
<dbReference type="Proteomes" id="UP000002196">
    <property type="component" value="Chromosome"/>
</dbReference>
<dbReference type="GO" id="GO:0005829">
    <property type="term" value="C:cytosol"/>
    <property type="evidence" value="ECO:0007669"/>
    <property type="project" value="TreeGrafter"/>
</dbReference>
<dbReference type="GO" id="GO:0004455">
    <property type="term" value="F:ketol-acid reductoisomerase activity"/>
    <property type="evidence" value="ECO:0007669"/>
    <property type="project" value="UniProtKB-UniRule"/>
</dbReference>
<dbReference type="GO" id="GO:0000287">
    <property type="term" value="F:magnesium ion binding"/>
    <property type="evidence" value="ECO:0007669"/>
    <property type="project" value="UniProtKB-UniRule"/>
</dbReference>
<dbReference type="GO" id="GO:0050661">
    <property type="term" value="F:NADP binding"/>
    <property type="evidence" value="ECO:0007669"/>
    <property type="project" value="InterPro"/>
</dbReference>
<dbReference type="GO" id="GO:0009097">
    <property type="term" value="P:isoleucine biosynthetic process"/>
    <property type="evidence" value="ECO:0007669"/>
    <property type="project" value="UniProtKB-UniRule"/>
</dbReference>
<dbReference type="GO" id="GO:0009099">
    <property type="term" value="P:L-valine biosynthetic process"/>
    <property type="evidence" value="ECO:0007669"/>
    <property type="project" value="UniProtKB-UniRule"/>
</dbReference>
<dbReference type="FunFam" id="3.40.50.720:FF:000023">
    <property type="entry name" value="Ketol-acid reductoisomerase (NADP(+))"/>
    <property type="match status" value="1"/>
</dbReference>
<dbReference type="Gene3D" id="6.10.240.10">
    <property type="match status" value="1"/>
</dbReference>
<dbReference type="Gene3D" id="3.40.50.720">
    <property type="entry name" value="NAD(P)-binding Rossmann-like Domain"/>
    <property type="match status" value="1"/>
</dbReference>
<dbReference type="HAMAP" id="MF_00435">
    <property type="entry name" value="IlvC"/>
    <property type="match status" value="1"/>
</dbReference>
<dbReference type="InterPro" id="IPR008927">
    <property type="entry name" value="6-PGluconate_DH-like_C_sf"/>
</dbReference>
<dbReference type="InterPro" id="IPR013023">
    <property type="entry name" value="KARI"/>
</dbReference>
<dbReference type="InterPro" id="IPR000506">
    <property type="entry name" value="KARI_C"/>
</dbReference>
<dbReference type="InterPro" id="IPR013116">
    <property type="entry name" value="KARI_N"/>
</dbReference>
<dbReference type="InterPro" id="IPR014359">
    <property type="entry name" value="KARI_prok"/>
</dbReference>
<dbReference type="InterPro" id="IPR036291">
    <property type="entry name" value="NAD(P)-bd_dom_sf"/>
</dbReference>
<dbReference type="NCBIfam" id="TIGR00465">
    <property type="entry name" value="ilvC"/>
    <property type="match status" value="1"/>
</dbReference>
<dbReference type="NCBIfam" id="NF004017">
    <property type="entry name" value="PRK05479.1"/>
    <property type="match status" value="1"/>
</dbReference>
<dbReference type="NCBIfam" id="NF009940">
    <property type="entry name" value="PRK13403.1"/>
    <property type="match status" value="1"/>
</dbReference>
<dbReference type="PANTHER" id="PTHR21371">
    <property type="entry name" value="KETOL-ACID REDUCTOISOMERASE, MITOCHONDRIAL"/>
    <property type="match status" value="1"/>
</dbReference>
<dbReference type="PANTHER" id="PTHR21371:SF1">
    <property type="entry name" value="KETOL-ACID REDUCTOISOMERASE, MITOCHONDRIAL"/>
    <property type="match status" value="1"/>
</dbReference>
<dbReference type="Pfam" id="PF01450">
    <property type="entry name" value="KARI_C"/>
    <property type="match status" value="1"/>
</dbReference>
<dbReference type="Pfam" id="PF07991">
    <property type="entry name" value="KARI_N"/>
    <property type="match status" value="1"/>
</dbReference>
<dbReference type="PIRSF" id="PIRSF000116">
    <property type="entry name" value="IlvC_gammaproteo"/>
    <property type="match status" value="1"/>
</dbReference>
<dbReference type="SUPFAM" id="SSF48179">
    <property type="entry name" value="6-phosphogluconate dehydrogenase C-terminal domain-like"/>
    <property type="match status" value="1"/>
</dbReference>
<dbReference type="SUPFAM" id="SSF51735">
    <property type="entry name" value="NAD(P)-binding Rossmann-fold domains"/>
    <property type="match status" value="1"/>
</dbReference>
<dbReference type="PROSITE" id="PS51851">
    <property type="entry name" value="KARI_C"/>
    <property type="match status" value="1"/>
</dbReference>
<dbReference type="PROSITE" id="PS51850">
    <property type="entry name" value="KARI_N"/>
    <property type="match status" value="1"/>
</dbReference>
<name>ILVC_LACLA</name>
<keyword id="KW-0028">Amino-acid biosynthesis</keyword>
<keyword id="KW-0100">Branched-chain amino acid biosynthesis</keyword>
<keyword id="KW-0460">Magnesium</keyword>
<keyword id="KW-0479">Metal-binding</keyword>
<keyword id="KW-0521">NADP</keyword>
<keyword id="KW-0560">Oxidoreductase</keyword>
<keyword id="KW-1185">Reference proteome</keyword>
<organism>
    <name type="scientific">Lactococcus lactis subsp. lactis (strain IL1403)</name>
    <name type="common">Streptococcus lactis</name>
    <dbReference type="NCBI Taxonomy" id="272623"/>
    <lineage>
        <taxon>Bacteria</taxon>
        <taxon>Bacillati</taxon>
        <taxon>Bacillota</taxon>
        <taxon>Bacilli</taxon>
        <taxon>Lactobacillales</taxon>
        <taxon>Streptococcaceae</taxon>
        <taxon>Lactococcus</taxon>
    </lineage>
</organism>
<gene>
    <name evidence="1" type="primary">ilvC</name>
    <name type="ordered locus">LL1226</name>
    <name type="ORF">L0080</name>
</gene>
<sequence>MAVTMYYEDDVEVSALAGKQIAVIGYGSQGHAHAQNLRDSGHNVIIGVRHGKSFDKAKEDGFETFEVGEAVAKADVIMVLAPDELQQSIYEEDIKPNLKAGSALGFAHGFNIHFGYIKVPEDVDVFMVAPKAPGHLVRRTYTEGFGTPALFVSHQNASGHAREIAMDWAKGIGCARVGIIETTFKEETEEDLFGEQAVLCGGLTALVEAGFETLTEAGYAGELAYFEVLHEMKLIVDLMYEGGFTKMRQSISNTAEFGDYVTGPRIITDAVKKNMKLVLADIQSGKFAQDFVDDFKAGRPKLTAYREAAKNLEIEKIGAELRKAMPFTQSGDDDAFKIYQ</sequence>
<feature type="chain" id="PRO_0000151318" description="Ketol-acid reductoisomerase (NADP(+))">
    <location>
        <begin position="1"/>
        <end position="340"/>
    </location>
</feature>
<feature type="domain" description="KARI N-terminal Rossmann" evidence="2">
    <location>
        <begin position="3"/>
        <end position="182"/>
    </location>
</feature>
<feature type="domain" description="KARI C-terminal knotted" evidence="3">
    <location>
        <begin position="183"/>
        <end position="328"/>
    </location>
</feature>
<feature type="active site" evidence="1">
    <location>
        <position position="108"/>
    </location>
</feature>
<feature type="binding site" evidence="1">
    <location>
        <begin position="26"/>
        <end position="29"/>
    </location>
    <ligand>
        <name>NADP(+)</name>
        <dbReference type="ChEBI" id="CHEBI:58349"/>
    </ligand>
</feature>
<feature type="binding site" evidence="1">
    <location>
        <position position="49"/>
    </location>
    <ligand>
        <name>NADP(+)</name>
        <dbReference type="ChEBI" id="CHEBI:58349"/>
    </ligand>
</feature>
<feature type="binding site" evidence="1">
    <location>
        <position position="53"/>
    </location>
    <ligand>
        <name>NADP(+)</name>
        <dbReference type="ChEBI" id="CHEBI:58349"/>
    </ligand>
</feature>
<feature type="binding site" evidence="1">
    <location>
        <begin position="83"/>
        <end position="86"/>
    </location>
    <ligand>
        <name>NADP(+)</name>
        <dbReference type="ChEBI" id="CHEBI:58349"/>
    </ligand>
</feature>
<feature type="binding site" evidence="1">
    <location>
        <position position="134"/>
    </location>
    <ligand>
        <name>NADP(+)</name>
        <dbReference type="ChEBI" id="CHEBI:58349"/>
    </ligand>
</feature>
<feature type="binding site" evidence="1">
    <location>
        <position position="191"/>
    </location>
    <ligand>
        <name>Mg(2+)</name>
        <dbReference type="ChEBI" id="CHEBI:18420"/>
        <label>1</label>
    </ligand>
</feature>
<feature type="binding site" evidence="1">
    <location>
        <position position="191"/>
    </location>
    <ligand>
        <name>Mg(2+)</name>
        <dbReference type="ChEBI" id="CHEBI:18420"/>
        <label>2</label>
    </ligand>
</feature>
<feature type="binding site" evidence="1">
    <location>
        <position position="195"/>
    </location>
    <ligand>
        <name>Mg(2+)</name>
        <dbReference type="ChEBI" id="CHEBI:18420"/>
        <label>1</label>
    </ligand>
</feature>
<feature type="binding site" evidence="1">
    <location>
        <position position="227"/>
    </location>
    <ligand>
        <name>Mg(2+)</name>
        <dbReference type="ChEBI" id="CHEBI:18420"/>
        <label>2</label>
    </ligand>
</feature>
<feature type="binding site" evidence="1">
    <location>
        <position position="231"/>
    </location>
    <ligand>
        <name>Mg(2+)</name>
        <dbReference type="ChEBI" id="CHEBI:18420"/>
        <label>2</label>
    </ligand>
</feature>
<feature type="binding site" evidence="1">
    <location>
        <position position="252"/>
    </location>
    <ligand>
        <name>substrate</name>
    </ligand>
</feature>
<feature type="mutagenesis site" description="Inversion of cofactor specificity from NADPH to NADH. Strong decrease of the affinity for NADPH and 2.5-fold increase of the affinity for NADH. 8-fold decrease of the catalytic efficiency for NADPH and 4-fold increase of the catalytic efficiency for NADH; when associated with P-49, L-52 and D-53." evidence="4">
    <original>V</original>
    <variation>L</variation>
    <location>
        <position position="48"/>
    </location>
</feature>
<feature type="mutagenesis site" description="Inversion of cofactor specificity from NADPH to NADH. Strong decrease of the affinity for NADPH and 2.5-fold increase of the affinity for NADH. 8-fold decrease of the catalytic efficiency for NADPH and 4-fold increase of the catalytic efficiency for NADH; when associated with L-48, L-52 and D-53." evidence="4">
    <original>R</original>
    <variation>P</variation>
    <location>
        <position position="49"/>
    </location>
</feature>
<feature type="mutagenesis site" description="Inversion of cofactor specificity from NADPH to NADH. Strong decrease of the affinity for NADPH and 2.5-fold increase of the affinity for NADH. 8-fold decrease of the catalytic efficiency for NADPH and 4-fold increase of the catalytic efficiency for NADH; when associated with L-48, P-49 and D-53." evidence="4">
    <original>K</original>
    <variation>L</variation>
    <location>
        <position position="52"/>
    </location>
</feature>
<feature type="mutagenesis site" description="Inversion of cofactor specificity from NADPH to NADH. Strong decrease of the affinity for NADPH and 2.5-fold increase of the affinity for NADH. 8-fold decrease of the catalytic efficiency for NADPH and 4-fold increase of the catalytic efficiency for NADH; when associated with L-48, P-49 and L-52." evidence="4">
    <original>S</original>
    <variation>D</variation>
    <location>
        <position position="53"/>
    </location>
</feature>
<feature type="sequence conflict" description="In Ref. 1; AAB81921." evidence="6" ref="1">
    <original>A</original>
    <variation>E</variation>
    <location>
        <position position="270"/>
    </location>
</feature>
<feature type="sequence conflict" description="In Ref. 1; AAB81921." evidence="6" ref="1">
    <original>T</original>
    <variation>I</variation>
    <location>
        <position position="303"/>
    </location>
</feature>
<feature type="sequence conflict" description="In Ref. 1; AAB81921." evidence="6" ref="1">
    <original>LRKAMPFTQSGDDDAFKIYQ</original>
    <variation>HVKQCHSHNLVMTMPLKSISNFSY</variation>
    <location>
        <begin position="321"/>
        <end position="340"/>
    </location>
</feature>
<reference key="1">
    <citation type="journal article" date="1992" name="J. Bacteriol.">
        <title>Branched-chain amino acid biosynthesis genes in Lactococcus lactis subsp. lactis.</title>
        <authorList>
            <person name="Godon J.-J."/>
            <person name="Chopin M.-C."/>
            <person name="Ehrlich S.D."/>
        </authorList>
    </citation>
    <scope>NUCLEOTIDE SEQUENCE [GENOMIC DNA]</scope>
    <scope>PATHWAY</scope>
    <source>
        <strain>NCDO 2118</strain>
    </source>
</reference>
<reference key="2">
    <citation type="journal article" date="2001" name="Genome Res.">
        <title>The complete genome sequence of the lactic acid bacterium Lactococcus lactis ssp. lactis IL1403.</title>
        <authorList>
            <person name="Bolotin A."/>
            <person name="Wincker P."/>
            <person name="Mauger S."/>
            <person name="Jaillon O."/>
            <person name="Malarme K."/>
            <person name="Weissenbach J."/>
            <person name="Ehrlich S.D."/>
            <person name="Sorokin A."/>
        </authorList>
    </citation>
    <scope>NUCLEOTIDE SEQUENCE [LARGE SCALE GENOMIC DNA]</scope>
    <source>
        <strain>IL1403</strain>
    </source>
</reference>
<reference key="3">
    <citation type="journal article" date="2013" name="Proc. Natl. Acad. Sci. U.S.A.">
        <title>General approach to reversing ketol-acid reductoisomerase cofactor dependence from NADPH to NADH.</title>
        <authorList>
            <person name="Brinkmann-Chen S."/>
            <person name="Flock T."/>
            <person name="Cahn J.K."/>
            <person name="Snow C.D."/>
            <person name="Brustad E.M."/>
            <person name="McIntosh J.A."/>
            <person name="Meinhold P."/>
            <person name="Zhang L."/>
            <person name="Arnold F.H."/>
        </authorList>
    </citation>
    <scope>FUNCTION</scope>
    <scope>CATALYTIC ACTIVITY</scope>
    <scope>BIOPHYSICOCHEMICAL PROPERTIES</scope>
    <scope>MUTAGENESIS OF VAL-48; ARG-49; LYS-52 AND SER-53</scope>
</reference>
<proteinExistence type="evidence at protein level"/>